<gene>
    <name evidence="1" type="primary">atpH</name>
    <name type="ordered locus">WP1192</name>
</gene>
<dbReference type="EMBL" id="AM999887">
    <property type="protein sequence ID" value="CAQ55300.1"/>
    <property type="molecule type" value="Genomic_DNA"/>
</dbReference>
<dbReference type="SMR" id="B3CN52"/>
<dbReference type="KEGG" id="wpi:WP1192"/>
<dbReference type="eggNOG" id="COG0712">
    <property type="taxonomic scope" value="Bacteria"/>
</dbReference>
<dbReference type="HOGENOM" id="CLU_085114_1_0_5"/>
<dbReference type="Proteomes" id="UP000008814">
    <property type="component" value="Chromosome"/>
</dbReference>
<dbReference type="GO" id="GO:0005886">
    <property type="term" value="C:plasma membrane"/>
    <property type="evidence" value="ECO:0007669"/>
    <property type="project" value="UniProtKB-SubCell"/>
</dbReference>
<dbReference type="GO" id="GO:0045259">
    <property type="term" value="C:proton-transporting ATP synthase complex"/>
    <property type="evidence" value="ECO:0007669"/>
    <property type="project" value="UniProtKB-KW"/>
</dbReference>
<dbReference type="GO" id="GO:0046933">
    <property type="term" value="F:proton-transporting ATP synthase activity, rotational mechanism"/>
    <property type="evidence" value="ECO:0007669"/>
    <property type="project" value="UniProtKB-UniRule"/>
</dbReference>
<dbReference type="Gene3D" id="1.10.520.20">
    <property type="entry name" value="N-terminal domain of the delta subunit of the F1F0-ATP synthase"/>
    <property type="match status" value="1"/>
</dbReference>
<dbReference type="HAMAP" id="MF_01416">
    <property type="entry name" value="ATP_synth_delta_bact"/>
    <property type="match status" value="1"/>
</dbReference>
<dbReference type="InterPro" id="IPR026015">
    <property type="entry name" value="ATP_synth_OSCP/delta_N_sf"/>
</dbReference>
<dbReference type="InterPro" id="IPR020781">
    <property type="entry name" value="ATPase_OSCP/d_CS"/>
</dbReference>
<dbReference type="InterPro" id="IPR000711">
    <property type="entry name" value="ATPase_OSCP/dsu"/>
</dbReference>
<dbReference type="NCBIfam" id="TIGR01145">
    <property type="entry name" value="ATP_synt_delta"/>
    <property type="match status" value="1"/>
</dbReference>
<dbReference type="PANTHER" id="PTHR11910">
    <property type="entry name" value="ATP SYNTHASE DELTA CHAIN"/>
    <property type="match status" value="1"/>
</dbReference>
<dbReference type="Pfam" id="PF00213">
    <property type="entry name" value="OSCP"/>
    <property type="match status" value="1"/>
</dbReference>
<dbReference type="PRINTS" id="PR00125">
    <property type="entry name" value="ATPASEDELTA"/>
</dbReference>
<dbReference type="SUPFAM" id="SSF47928">
    <property type="entry name" value="N-terminal domain of the delta subunit of the F1F0-ATP synthase"/>
    <property type="match status" value="1"/>
</dbReference>
<dbReference type="PROSITE" id="PS00389">
    <property type="entry name" value="ATPASE_DELTA"/>
    <property type="match status" value="1"/>
</dbReference>
<evidence type="ECO:0000255" key="1">
    <source>
        <dbReference type="HAMAP-Rule" id="MF_01416"/>
    </source>
</evidence>
<comment type="function">
    <text evidence="1">F(1)F(0) ATP synthase produces ATP from ADP in the presence of a proton or sodium gradient. F-type ATPases consist of two structural domains, F(1) containing the extramembraneous catalytic core and F(0) containing the membrane proton channel, linked together by a central stalk and a peripheral stalk. During catalysis, ATP synthesis in the catalytic domain of F(1) is coupled via a rotary mechanism of the central stalk subunits to proton translocation.</text>
</comment>
<comment type="function">
    <text evidence="1">This protein is part of the stalk that links CF(0) to CF(1). It either transmits conformational changes from CF(0) to CF(1) or is implicated in proton conduction.</text>
</comment>
<comment type="subunit">
    <text evidence="1">F-type ATPases have 2 components, F(1) - the catalytic core - and F(0) - the membrane proton channel. F(1) has five subunits: alpha(3), beta(3), gamma(1), delta(1), epsilon(1). F(0) has three main subunits: a(1), b(2) and c(10-14). The alpha and beta chains form an alternating ring which encloses part of the gamma chain. F(1) is attached to F(0) by a central stalk formed by the gamma and epsilon chains, while a peripheral stalk is formed by the delta and b chains.</text>
</comment>
<comment type="subcellular location">
    <subcellularLocation>
        <location evidence="1">Cell membrane</location>
        <topology evidence="1">Peripheral membrane protein</topology>
    </subcellularLocation>
</comment>
<comment type="similarity">
    <text evidence="1">Belongs to the ATPase delta chain family.</text>
</comment>
<name>ATPD_WOLPP</name>
<sequence length="184" mass="21095">MNMKNNNLVSSYARALFHVSGSRLGIIRKEVEFLLAFFKDQDVFVYLSHPMVSLLHKKEAILSIKENLSENLVKFIMVTLANKRSRLLILILEKFLNLVRESENELEITIKSAEILKKPDIKIITESLNFLGKIIKVSHVVDPSILGGFVVRYGFNVIDASLKSYLDRLVDLSKMEMLKIRNCI</sequence>
<keyword id="KW-0066">ATP synthesis</keyword>
<keyword id="KW-1003">Cell membrane</keyword>
<keyword id="KW-0139">CF(1)</keyword>
<keyword id="KW-0375">Hydrogen ion transport</keyword>
<keyword id="KW-0406">Ion transport</keyword>
<keyword id="KW-0472">Membrane</keyword>
<keyword id="KW-0813">Transport</keyword>
<proteinExistence type="inferred from homology"/>
<organism>
    <name type="scientific">Wolbachia pipientis subsp. Culex pipiens (strain wPip)</name>
    <dbReference type="NCBI Taxonomy" id="570417"/>
    <lineage>
        <taxon>Bacteria</taxon>
        <taxon>Pseudomonadati</taxon>
        <taxon>Pseudomonadota</taxon>
        <taxon>Alphaproteobacteria</taxon>
        <taxon>Rickettsiales</taxon>
        <taxon>Anaplasmataceae</taxon>
        <taxon>Wolbachieae</taxon>
        <taxon>Wolbachia</taxon>
    </lineage>
</organism>
<accession>B3CN52</accession>
<protein>
    <recommendedName>
        <fullName evidence="1">ATP synthase subunit delta</fullName>
    </recommendedName>
    <alternativeName>
        <fullName evidence="1">ATP synthase F(1) sector subunit delta</fullName>
    </alternativeName>
    <alternativeName>
        <fullName evidence="1">F-type ATPase subunit delta</fullName>
        <shortName evidence="1">F-ATPase subunit delta</shortName>
    </alternativeName>
</protein>
<reference key="1">
    <citation type="journal article" date="2008" name="Mol. Biol. Evol.">
        <title>Genome evolution of Wolbachia strain wPip from the Culex pipiens group.</title>
        <authorList>
            <person name="Klasson L."/>
            <person name="Walker T."/>
            <person name="Sebaihia M."/>
            <person name="Sanders M.J."/>
            <person name="Quail M.A."/>
            <person name="Lord A."/>
            <person name="Sanders S."/>
            <person name="Earl J."/>
            <person name="O'Neill S.L."/>
            <person name="Thomson N."/>
            <person name="Sinkins S.P."/>
            <person name="Parkhill J."/>
        </authorList>
    </citation>
    <scope>NUCLEOTIDE SEQUENCE [LARGE SCALE GENOMIC DNA]</scope>
    <source>
        <strain>wPip</strain>
    </source>
</reference>
<feature type="chain" id="PRO_1000184832" description="ATP synthase subunit delta">
    <location>
        <begin position="1"/>
        <end position="184"/>
    </location>
</feature>